<feature type="chain" id="PRO_1000138253" description="Flagellar assembly factor FliW">
    <location>
        <begin position="1"/>
        <end position="152"/>
    </location>
</feature>
<evidence type="ECO:0000255" key="1">
    <source>
        <dbReference type="HAMAP-Rule" id="MF_01185"/>
    </source>
</evidence>
<protein>
    <recommendedName>
        <fullName evidence="1">Flagellar assembly factor FliW</fullName>
    </recommendedName>
</protein>
<dbReference type="EMBL" id="CP000679">
    <property type="protein sequence ID" value="ABP67260.1"/>
    <property type="molecule type" value="Genomic_DNA"/>
</dbReference>
<dbReference type="RefSeq" id="WP_011917195.1">
    <property type="nucleotide sequence ID" value="NC_009437.1"/>
</dbReference>
<dbReference type="SMR" id="A4XK25"/>
<dbReference type="STRING" id="351627.Csac_1670"/>
<dbReference type="KEGG" id="csc:Csac_1670"/>
<dbReference type="eggNOG" id="COG1699">
    <property type="taxonomic scope" value="Bacteria"/>
</dbReference>
<dbReference type="HOGENOM" id="CLU_112356_0_2_9"/>
<dbReference type="OrthoDB" id="9801235at2"/>
<dbReference type="Proteomes" id="UP000000256">
    <property type="component" value="Chromosome"/>
</dbReference>
<dbReference type="GO" id="GO:0005737">
    <property type="term" value="C:cytoplasm"/>
    <property type="evidence" value="ECO:0007669"/>
    <property type="project" value="UniProtKB-SubCell"/>
</dbReference>
<dbReference type="GO" id="GO:0044780">
    <property type="term" value="P:bacterial-type flagellum assembly"/>
    <property type="evidence" value="ECO:0007669"/>
    <property type="project" value="UniProtKB-UniRule"/>
</dbReference>
<dbReference type="GO" id="GO:0006417">
    <property type="term" value="P:regulation of translation"/>
    <property type="evidence" value="ECO:0007669"/>
    <property type="project" value="UniProtKB-KW"/>
</dbReference>
<dbReference type="Gene3D" id="2.30.290.10">
    <property type="entry name" value="BH3618-like"/>
    <property type="match status" value="1"/>
</dbReference>
<dbReference type="HAMAP" id="MF_01185">
    <property type="entry name" value="FliW"/>
    <property type="match status" value="1"/>
</dbReference>
<dbReference type="InterPro" id="IPR003775">
    <property type="entry name" value="Flagellar_assembly_factor_FliW"/>
</dbReference>
<dbReference type="InterPro" id="IPR024046">
    <property type="entry name" value="Flagellar_assmbl_FliW_dom_sf"/>
</dbReference>
<dbReference type="NCBIfam" id="NF009793">
    <property type="entry name" value="PRK13285.1-1"/>
    <property type="match status" value="1"/>
</dbReference>
<dbReference type="NCBIfam" id="NF009798">
    <property type="entry name" value="PRK13285.2-1"/>
    <property type="match status" value="1"/>
</dbReference>
<dbReference type="PANTHER" id="PTHR39190">
    <property type="entry name" value="FLAGELLAR ASSEMBLY FACTOR FLIW"/>
    <property type="match status" value="1"/>
</dbReference>
<dbReference type="PANTHER" id="PTHR39190:SF1">
    <property type="entry name" value="FLAGELLAR ASSEMBLY FACTOR FLIW"/>
    <property type="match status" value="1"/>
</dbReference>
<dbReference type="Pfam" id="PF02623">
    <property type="entry name" value="FliW"/>
    <property type="match status" value="1"/>
</dbReference>
<dbReference type="SUPFAM" id="SSF141457">
    <property type="entry name" value="BH3618-like"/>
    <property type="match status" value="1"/>
</dbReference>
<name>FLIW_CALS8</name>
<gene>
    <name evidence="1" type="primary">fliW</name>
    <name type="ordered locus">Csac_1670</name>
</gene>
<proteinExistence type="inferred from homology"/>
<comment type="function">
    <text evidence="1">Acts as an anti-CsrA protein, binds CsrA and prevents it from repressing translation of its target genes, one of which is flagellin. Binds to flagellin and participates in the assembly of the flagellum.</text>
</comment>
<comment type="subunit">
    <text evidence="1">Interacts with translational regulator CsrA and flagellin(s).</text>
</comment>
<comment type="subcellular location">
    <subcellularLocation>
        <location evidence="1">Cytoplasm</location>
    </subcellularLocation>
</comment>
<comment type="similarity">
    <text evidence="1">Belongs to the FliW family.</text>
</comment>
<sequence>MVVQKSVVRSRVFGELEVSEENIIFFEEGIPAFENLKKFVIVKEDQSPFYWLQSVEDKDIAFVIINPFEIKPDYEFDLPDEIVNKLEITSAEDVAVFCIVVIPEDVKQTRVNLKAPVIINVNKRKGMQYLLDDERYPLRYYLFENLNSNVQK</sequence>
<keyword id="KW-1005">Bacterial flagellum biogenesis</keyword>
<keyword id="KW-0143">Chaperone</keyword>
<keyword id="KW-0963">Cytoplasm</keyword>
<keyword id="KW-0810">Translation regulation</keyword>
<reference key="1">
    <citation type="submission" date="2007-04" db="EMBL/GenBank/DDBJ databases">
        <title>Genome sequence of the thermophilic hydrogen-producing bacterium Caldicellulosiruptor saccharolyticus DSM 8903.</title>
        <authorList>
            <person name="Copeland A."/>
            <person name="Lucas S."/>
            <person name="Lapidus A."/>
            <person name="Barry K."/>
            <person name="Detter J.C."/>
            <person name="Glavina del Rio T."/>
            <person name="Hammon N."/>
            <person name="Israni S."/>
            <person name="Dalin E."/>
            <person name="Tice H."/>
            <person name="Pitluck S."/>
            <person name="Kiss H."/>
            <person name="Brettin T."/>
            <person name="Bruce D."/>
            <person name="Han C."/>
            <person name="Schmutz J."/>
            <person name="Larimer F."/>
            <person name="Land M."/>
            <person name="Hauser L."/>
            <person name="Kyrpides N."/>
            <person name="Lykidis A."/>
            <person name="van de Werken H.J.G."/>
            <person name="Verhaart M.R.A."/>
            <person name="VanFossen A.L."/>
            <person name="Lewis D.L."/>
            <person name="Nichols J.D."/>
            <person name="Goorissen H.P."/>
            <person name="van Niel E.W.J."/>
            <person name="Stams F.J.M."/>
            <person name="Willquist K.U."/>
            <person name="Ward D.E."/>
            <person name="van der Oost J."/>
            <person name="Kelly R.M."/>
            <person name="Kengen S.M.W."/>
            <person name="Richardson P."/>
        </authorList>
    </citation>
    <scope>NUCLEOTIDE SEQUENCE [LARGE SCALE GENOMIC DNA]</scope>
    <source>
        <strain>ATCC 43494 / DSM 8903 / Tp8T 6331</strain>
    </source>
</reference>
<accession>A4XK25</accession>
<organism>
    <name type="scientific">Caldicellulosiruptor saccharolyticus (strain ATCC 43494 / DSM 8903 / Tp8T 6331)</name>
    <dbReference type="NCBI Taxonomy" id="351627"/>
    <lineage>
        <taxon>Bacteria</taxon>
        <taxon>Bacillati</taxon>
        <taxon>Bacillota</taxon>
        <taxon>Bacillota incertae sedis</taxon>
        <taxon>Caldicellulosiruptorales</taxon>
        <taxon>Caldicellulosiruptoraceae</taxon>
        <taxon>Caldicellulosiruptor</taxon>
    </lineage>
</organism>